<sequence length="315" mass="33717">MGKRAKITVVGAGHVGEHVAMFCAIKELGDVVLIDIVEDMPQGKALDMFEATPLEGWDSRIVGTNDYADTADSDIVVITAGSPRKPGMSRDDLLEINAKIIKAVTEQVAKYSPNAVIIVVTNPLDAMTQLAWNVSGFPKNRVLGQAGNLDSARFRAFIAMELGVSVKEISAMVLGGHGDDMVPLPRFTTVSGIPITELIPPDRIEALVQRTRVGGGEIVKLLKTGSAYYAPALATVEMVEAILKDQKRIQPCAALCEGEYGINGVYCGVPCLLGANGVEKIIELKLTDDELKALQASAGRVKGLIDKLTEWGYIK</sequence>
<evidence type="ECO:0000255" key="1">
    <source>
        <dbReference type="HAMAP-Rule" id="MF_00487"/>
    </source>
</evidence>
<evidence type="ECO:0000269" key="2">
    <source>
    </source>
</evidence>
<evidence type="ECO:0000303" key="3">
    <source>
    </source>
</evidence>
<evidence type="ECO:0000312" key="4">
    <source>
        <dbReference type="EMBL" id="BAT71584.1"/>
    </source>
</evidence>
<comment type="function">
    <text evidence="1 2">Catalyzes the reversible oxidation of malate to oxaloacetate.</text>
</comment>
<comment type="catalytic activity">
    <reaction evidence="1 2">
        <text>(S)-malate + NAD(+) = oxaloacetate + NADH + H(+)</text>
        <dbReference type="Rhea" id="RHEA:21432"/>
        <dbReference type="ChEBI" id="CHEBI:15378"/>
        <dbReference type="ChEBI" id="CHEBI:15589"/>
        <dbReference type="ChEBI" id="CHEBI:16452"/>
        <dbReference type="ChEBI" id="CHEBI:57540"/>
        <dbReference type="ChEBI" id="CHEBI:57945"/>
        <dbReference type="EC" id="1.1.1.37"/>
    </reaction>
</comment>
<comment type="biophysicochemical properties">
    <kinetics>
        <KM evidence="2">20.1 uM for oxaloacetate</KM>
        <Vmax evidence="2">1550.0 umol/min/mg enzyme toward oxaloacetate</Vmax>
        <text evidence="2">kcat is 871 sec(-1) with oxaloacetate as substrate.</text>
    </kinetics>
</comment>
<comment type="similarity">
    <text evidence="1">Belongs to the LDH/MDH superfamily. MDH type 3 family.</text>
</comment>
<organism>
    <name type="scientific">Thermosulfidibacter takaii (strain DSM 17441 / JCM 13301 / NBRC 103674 / ABI70S6)</name>
    <dbReference type="NCBI Taxonomy" id="1298851"/>
    <lineage>
        <taxon>Bacteria</taxon>
        <taxon>Pseudomonadati</taxon>
        <taxon>Thermosulfidibacterota</taxon>
        <taxon>Thermosulfidibacteria</taxon>
        <taxon>Thermosulfidibacterales</taxon>
        <taxon>Thermosulfidibacteraceae</taxon>
    </lineage>
</organism>
<dbReference type="EC" id="1.1.1.37" evidence="1 2"/>
<dbReference type="EMBL" id="AP013035">
    <property type="protein sequence ID" value="BAT71584.1"/>
    <property type="molecule type" value="Genomic_DNA"/>
</dbReference>
<dbReference type="RefSeq" id="WP_068549586.1">
    <property type="nucleotide sequence ID" value="NZ_AP013035.1"/>
</dbReference>
<dbReference type="SMR" id="A0A0S3QTC6"/>
<dbReference type="STRING" id="1298851.TST_0784"/>
<dbReference type="KEGG" id="ttk:TST_0784"/>
<dbReference type="PATRIC" id="fig|1298851.3.peg.819"/>
<dbReference type="OrthoDB" id="9802969at2"/>
<dbReference type="SABIO-RK" id="A0A0S3QTC6"/>
<dbReference type="Proteomes" id="UP000063234">
    <property type="component" value="Chromosome"/>
</dbReference>
<dbReference type="GO" id="GO:0004459">
    <property type="term" value="F:L-lactate dehydrogenase activity"/>
    <property type="evidence" value="ECO:0007669"/>
    <property type="project" value="TreeGrafter"/>
</dbReference>
<dbReference type="GO" id="GO:0030060">
    <property type="term" value="F:L-malate dehydrogenase (NAD+) activity"/>
    <property type="evidence" value="ECO:0007669"/>
    <property type="project" value="UniProtKB-UniRule"/>
</dbReference>
<dbReference type="GO" id="GO:0006089">
    <property type="term" value="P:lactate metabolic process"/>
    <property type="evidence" value="ECO:0007669"/>
    <property type="project" value="TreeGrafter"/>
</dbReference>
<dbReference type="GO" id="GO:0006099">
    <property type="term" value="P:tricarboxylic acid cycle"/>
    <property type="evidence" value="ECO:0007669"/>
    <property type="project" value="UniProtKB-UniRule"/>
</dbReference>
<dbReference type="CDD" id="cd01339">
    <property type="entry name" value="LDH-like_MDH"/>
    <property type="match status" value="1"/>
</dbReference>
<dbReference type="FunFam" id="3.40.50.720:FF:000018">
    <property type="entry name" value="Malate dehydrogenase"/>
    <property type="match status" value="1"/>
</dbReference>
<dbReference type="FunFam" id="3.90.110.10:FF:000004">
    <property type="entry name" value="Malate dehydrogenase"/>
    <property type="match status" value="1"/>
</dbReference>
<dbReference type="Gene3D" id="3.90.110.10">
    <property type="entry name" value="Lactate dehydrogenase/glycoside hydrolase, family 4, C-terminal"/>
    <property type="match status" value="1"/>
</dbReference>
<dbReference type="Gene3D" id="3.40.50.720">
    <property type="entry name" value="NAD(P)-binding Rossmann-like Domain"/>
    <property type="match status" value="1"/>
</dbReference>
<dbReference type="HAMAP" id="MF_00487">
    <property type="entry name" value="Malate_dehydrog_3"/>
    <property type="match status" value="1"/>
</dbReference>
<dbReference type="InterPro" id="IPR001557">
    <property type="entry name" value="L-lactate/malate_DH"/>
</dbReference>
<dbReference type="InterPro" id="IPR022383">
    <property type="entry name" value="Lactate/malate_DH_C"/>
</dbReference>
<dbReference type="InterPro" id="IPR001236">
    <property type="entry name" value="Lactate/malate_DH_N"/>
</dbReference>
<dbReference type="InterPro" id="IPR015955">
    <property type="entry name" value="Lactate_DH/Glyco_Ohase_4_C"/>
</dbReference>
<dbReference type="InterPro" id="IPR011275">
    <property type="entry name" value="Malate_DH_type3"/>
</dbReference>
<dbReference type="InterPro" id="IPR036291">
    <property type="entry name" value="NAD(P)-bd_dom_sf"/>
</dbReference>
<dbReference type="NCBIfam" id="TIGR01763">
    <property type="entry name" value="MalateDH_bact"/>
    <property type="match status" value="1"/>
</dbReference>
<dbReference type="NCBIfam" id="NF004863">
    <property type="entry name" value="PRK06223.1"/>
    <property type="match status" value="1"/>
</dbReference>
<dbReference type="PANTHER" id="PTHR43128">
    <property type="entry name" value="L-2-HYDROXYCARBOXYLATE DEHYDROGENASE (NAD(P)(+))"/>
    <property type="match status" value="1"/>
</dbReference>
<dbReference type="PANTHER" id="PTHR43128:SF16">
    <property type="entry name" value="L-LACTATE DEHYDROGENASE"/>
    <property type="match status" value="1"/>
</dbReference>
<dbReference type="Pfam" id="PF02866">
    <property type="entry name" value="Ldh_1_C"/>
    <property type="match status" value="1"/>
</dbReference>
<dbReference type="Pfam" id="PF00056">
    <property type="entry name" value="Ldh_1_N"/>
    <property type="match status" value="1"/>
</dbReference>
<dbReference type="PIRSF" id="PIRSF000102">
    <property type="entry name" value="Lac_mal_DH"/>
    <property type="match status" value="1"/>
</dbReference>
<dbReference type="PRINTS" id="PR00086">
    <property type="entry name" value="LLDHDRGNASE"/>
</dbReference>
<dbReference type="SUPFAM" id="SSF56327">
    <property type="entry name" value="LDH C-terminal domain-like"/>
    <property type="match status" value="1"/>
</dbReference>
<dbReference type="SUPFAM" id="SSF51735">
    <property type="entry name" value="NAD(P)-binding Rossmann-fold domains"/>
    <property type="match status" value="1"/>
</dbReference>
<gene>
    <name evidence="1" type="primary">mdh</name>
    <name evidence="4" type="ORF">TST_0784</name>
</gene>
<keyword id="KW-0520">NAD</keyword>
<keyword id="KW-0560">Oxidoreductase</keyword>
<keyword id="KW-1185">Reference proteome</keyword>
<keyword id="KW-0816">Tricarboxylic acid cycle</keyword>
<accession>A0A0S3QTC6</accession>
<protein>
    <recommendedName>
        <fullName evidence="1 3">Malate dehydrogenase</fullName>
        <shortName evidence="3">MDH</shortName>
        <ecNumber evidence="1 2">1.1.1.37</ecNumber>
    </recommendedName>
</protein>
<name>MDH_THET7</name>
<reference key="1">
    <citation type="journal article" date="2018" name="Science">
        <title>A primordial and reversible TCA cycle in a facultatively chemolithoautotrophic thermophile.</title>
        <authorList>
            <person name="Nunoura T."/>
            <person name="Chikaraishi Y."/>
            <person name="Izaki R."/>
            <person name="Suwa T."/>
            <person name="Sato T."/>
            <person name="Harada T."/>
            <person name="Mori K."/>
            <person name="Kato Y."/>
            <person name="Miyazaki M."/>
            <person name="Shimamura S."/>
            <person name="Yanagawa K."/>
            <person name="Shuto A."/>
            <person name="Ohkouchi N."/>
            <person name="Fujita N."/>
            <person name="Takaki Y."/>
            <person name="Atomi H."/>
            <person name="Takai K."/>
        </authorList>
    </citation>
    <scope>NUCLEOTIDE SEQUENCE [LARGE SCALE GENOMIC DNA]</scope>
    <scope>FUNCTION</scope>
    <scope>CATALYTIC ACTIVITY</scope>
    <scope>BIOPHYSICOCHEMICAL PROPERTIES</scope>
    <source>
        <strain>DSM 17441 / JCM 13301 / NBRC 103674 / ABI70S6</strain>
    </source>
</reference>
<proteinExistence type="evidence at protein level"/>
<feature type="chain" id="PRO_0000443957" description="Malate dehydrogenase">
    <location>
        <begin position="1"/>
        <end position="315"/>
    </location>
</feature>
<feature type="active site" description="Proton acceptor" evidence="1">
    <location>
        <position position="177"/>
    </location>
</feature>
<feature type="binding site" evidence="1">
    <location>
        <begin position="11"/>
        <end position="16"/>
    </location>
    <ligand>
        <name>NAD(+)</name>
        <dbReference type="ChEBI" id="CHEBI:57540"/>
    </ligand>
</feature>
<feature type="binding site" evidence="1">
    <location>
        <position position="35"/>
    </location>
    <ligand>
        <name>NAD(+)</name>
        <dbReference type="ChEBI" id="CHEBI:57540"/>
    </ligand>
</feature>
<feature type="binding site" evidence="1">
    <location>
        <position position="84"/>
    </location>
    <ligand>
        <name>substrate</name>
    </ligand>
</feature>
<feature type="binding site" evidence="1">
    <location>
        <position position="90"/>
    </location>
    <ligand>
        <name>substrate</name>
    </ligand>
</feature>
<feature type="binding site" evidence="1">
    <location>
        <position position="97"/>
    </location>
    <ligand>
        <name>NAD(+)</name>
        <dbReference type="ChEBI" id="CHEBI:57540"/>
    </ligand>
</feature>
<feature type="binding site" evidence="1">
    <location>
        <begin position="120"/>
        <end position="122"/>
    </location>
    <ligand>
        <name>NAD(+)</name>
        <dbReference type="ChEBI" id="CHEBI:57540"/>
    </ligand>
</feature>
<feature type="binding site" evidence="1">
    <location>
        <position position="122"/>
    </location>
    <ligand>
        <name>substrate</name>
    </ligand>
</feature>
<feature type="binding site" evidence="1">
    <location>
        <position position="153"/>
    </location>
    <ligand>
        <name>substrate</name>
    </ligand>
</feature>